<proteinExistence type="inferred from homology"/>
<name>LUXS_BACLD</name>
<protein>
    <recommendedName>
        <fullName evidence="1">S-ribosylhomocysteine lyase</fullName>
        <ecNumber evidence="1">4.4.1.21</ecNumber>
    </recommendedName>
    <alternativeName>
        <fullName evidence="1">AI-2 synthesis protein</fullName>
    </alternativeName>
    <alternativeName>
        <fullName evidence="1">Autoinducer-2 production protein LuxS</fullName>
    </alternativeName>
</protein>
<evidence type="ECO:0000255" key="1">
    <source>
        <dbReference type="HAMAP-Rule" id="MF_00091"/>
    </source>
</evidence>
<gene>
    <name evidence="1" type="primary">luxS</name>
    <name type="ordered locus">BLi03209</name>
    <name type="ordered locus">BL05306</name>
</gene>
<feature type="chain" id="PRO_0000297982" description="S-ribosylhomocysteine lyase">
    <location>
        <begin position="1"/>
        <end position="157"/>
    </location>
</feature>
<feature type="binding site" evidence="1">
    <location>
        <position position="54"/>
    </location>
    <ligand>
        <name>Fe cation</name>
        <dbReference type="ChEBI" id="CHEBI:24875"/>
    </ligand>
</feature>
<feature type="binding site" evidence="1">
    <location>
        <position position="58"/>
    </location>
    <ligand>
        <name>Fe cation</name>
        <dbReference type="ChEBI" id="CHEBI:24875"/>
    </ligand>
</feature>
<feature type="binding site" evidence="1">
    <location>
        <position position="126"/>
    </location>
    <ligand>
        <name>Fe cation</name>
        <dbReference type="ChEBI" id="CHEBI:24875"/>
    </ligand>
</feature>
<comment type="function">
    <text evidence="1">Involved in the synthesis of autoinducer 2 (AI-2) which is secreted by bacteria and is used to communicate both the cell density and the metabolic potential of the environment. The regulation of gene expression in response to changes in cell density is called quorum sensing. Catalyzes the transformation of S-ribosylhomocysteine (RHC) to homocysteine (HC) and 4,5-dihydroxy-2,3-pentadione (DPD).</text>
</comment>
<comment type="catalytic activity">
    <reaction evidence="1">
        <text>S-(5-deoxy-D-ribos-5-yl)-L-homocysteine = (S)-4,5-dihydroxypentane-2,3-dione + L-homocysteine</text>
        <dbReference type="Rhea" id="RHEA:17753"/>
        <dbReference type="ChEBI" id="CHEBI:29484"/>
        <dbReference type="ChEBI" id="CHEBI:58195"/>
        <dbReference type="ChEBI" id="CHEBI:58199"/>
        <dbReference type="EC" id="4.4.1.21"/>
    </reaction>
</comment>
<comment type="cofactor">
    <cofactor evidence="1">
        <name>Fe cation</name>
        <dbReference type="ChEBI" id="CHEBI:24875"/>
    </cofactor>
    <text evidence="1">Binds 1 Fe cation per subunit.</text>
</comment>
<comment type="subunit">
    <text evidence="1">Homodimer.</text>
</comment>
<comment type="similarity">
    <text evidence="1">Belongs to the LuxS family.</text>
</comment>
<sequence length="157" mass="17885">MPSVESFELDHNAVKAPYVRHCGVHKVGTDGVVNKFDIRFCQPNKQAMKPDTIHTLEHLLAFTIRTYAEKYDHFDIIDISPMGCQTGYYLVVSGEPKVEEIVDLLEDTFKEAVEVTEIPAANEKQCGQAKLHDLEGAKRMMRFWLSQNKEDLLKVFG</sequence>
<keyword id="KW-0071">Autoinducer synthesis</keyword>
<keyword id="KW-0408">Iron</keyword>
<keyword id="KW-0456">Lyase</keyword>
<keyword id="KW-0479">Metal-binding</keyword>
<keyword id="KW-0673">Quorum sensing</keyword>
<keyword id="KW-1185">Reference proteome</keyword>
<dbReference type="EC" id="4.4.1.21" evidence="1"/>
<dbReference type="EMBL" id="CP000002">
    <property type="protein sequence ID" value="AAU24707.1"/>
    <property type="molecule type" value="Genomic_DNA"/>
</dbReference>
<dbReference type="EMBL" id="AE017333">
    <property type="protein sequence ID" value="AAU42069.1"/>
    <property type="molecule type" value="Genomic_DNA"/>
</dbReference>
<dbReference type="RefSeq" id="WP_003184615.1">
    <property type="nucleotide sequence ID" value="NC_006322.1"/>
</dbReference>
<dbReference type="SMR" id="Q65FU5"/>
<dbReference type="STRING" id="279010.BL05306"/>
<dbReference type="KEGG" id="bld:BLi03209"/>
<dbReference type="KEGG" id="bli:BL05306"/>
<dbReference type="eggNOG" id="COG1854">
    <property type="taxonomic scope" value="Bacteria"/>
</dbReference>
<dbReference type="HOGENOM" id="CLU_107531_2_0_9"/>
<dbReference type="Proteomes" id="UP000000606">
    <property type="component" value="Chromosome"/>
</dbReference>
<dbReference type="GO" id="GO:0005506">
    <property type="term" value="F:iron ion binding"/>
    <property type="evidence" value="ECO:0007669"/>
    <property type="project" value="InterPro"/>
</dbReference>
<dbReference type="GO" id="GO:0043768">
    <property type="term" value="F:S-ribosylhomocysteine lyase activity"/>
    <property type="evidence" value="ECO:0007669"/>
    <property type="project" value="UniProtKB-UniRule"/>
</dbReference>
<dbReference type="GO" id="GO:0009372">
    <property type="term" value="P:quorum sensing"/>
    <property type="evidence" value="ECO:0007669"/>
    <property type="project" value="UniProtKB-UniRule"/>
</dbReference>
<dbReference type="Gene3D" id="3.30.1360.80">
    <property type="entry name" value="S-ribosylhomocysteinase (LuxS)"/>
    <property type="match status" value="1"/>
</dbReference>
<dbReference type="HAMAP" id="MF_00091">
    <property type="entry name" value="LuxS"/>
    <property type="match status" value="1"/>
</dbReference>
<dbReference type="InterPro" id="IPR037005">
    <property type="entry name" value="LuxS_sf"/>
</dbReference>
<dbReference type="InterPro" id="IPR011249">
    <property type="entry name" value="Metalloenz_LuxS/M16"/>
</dbReference>
<dbReference type="InterPro" id="IPR003815">
    <property type="entry name" value="S-ribosylhomocysteinase"/>
</dbReference>
<dbReference type="NCBIfam" id="NF002603">
    <property type="entry name" value="PRK02260.1-3"/>
    <property type="match status" value="1"/>
</dbReference>
<dbReference type="PANTHER" id="PTHR35799">
    <property type="entry name" value="S-RIBOSYLHOMOCYSTEINE LYASE"/>
    <property type="match status" value="1"/>
</dbReference>
<dbReference type="PANTHER" id="PTHR35799:SF1">
    <property type="entry name" value="S-RIBOSYLHOMOCYSTEINE LYASE"/>
    <property type="match status" value="1"/>
</dbReference>
<dbReference type="Pfam" id="PF02664">
    <property type="entry name" value="LuxS"/>
    <property type="match status" value="1"/>
</dbReference>
<dbReference type="PIRSF" id="PIRSF006160">
    <property type="entry name" value="AI2"/>
    <property type="match status" value="1"/>
</dbReference>
<dbReference type="PRINTS" id="PR01487">
    <property type="entry name" value="LUXSPROTEIN"/>
</dbReference>
<dbReference type="SUPFAM" id="SSF63411">
    <property type="entry name" value="LuxS/MPP-like metallohydrolase"/>
    <property type="match status" value="1"/>
</dbReference>
<organism>
    <name type="scientific">Bacillus licheniformis (strain ATCC 14580 / DSM 13 / JCM 2505 / CCUG 7422 / NBRC 12200 / NCIMB 9375 / NCTC 10341 / NRRL NRS-1264 / Gibson 46)</name>
    <dbReference type="NCBI Taxonomy" id="279010"/>
    <lineage>
        <taxon>Bacteria</taxon>
        <taxon>Bacillati</taxon>
        <taxon>Bacillota</taxon>
        <taxon>Bacilli</taxon>
        <taxon>Bacillales</taxon>
        <taxon>Bacillaceae</taxon>
        <taxon>Bacillus</taxon>
    </lineage>
</organism>
<reference key="1">
    <citation type="journal article" date="2004" name="J. Mol. Microbiol. Biotechnol.">
        <title>The complete genome sequence of Bacillus licheniformis DSM13, an organism with great industrial potential.</title>
        <authorList>
            <person name="Veith B."/>
            <person name="Herzberg C."/>
            <person name="Steckel S."/>
            <person name="Feesche J."/>
            <person name="Maurer K.H."/>
            <person name="Ehrenreich P."/>
            <person name="Baeumer S."/>
            <person name="Henne A."/>
            <person name="Liesegang H."/>
            <person name="Merkl R."/>
            <person name="Ehrenreich A."/>
            <person name="Gottschalk G."/>
        </authorList>
    </citation>
    <scope>NUCLEOTIDE SEQUENCE [LARGE SCALE GENOMIC DNA]</scope>
    <source>
        <strain>ATCC 14580 / DSM 13 / JCM 2505 / CCUG 7422 / NBRC 12200 / NCIMB 9375 / NCTC 10341 / NRRL NRS-1264 / Gibson 46</strain>
    </source>
</reference>
<reference key="2">
    <citation type="journal article" date="2004" name="Genome Biol.">
        <title>Complete genome sequence of the industrial bacterium Bacillus licheniformis and comparisons with closely related Bacillus species.</title>
        <authorList>
            <person name="Rey M.W."/>
            <person name="Ramaiya P."/>
            <person name="Nelson B.A."/>
            <person name="Brody-Karpin S.D."/>
            <person name="Zaretsky E.J."/>
            <person name="Tang M."/>
            <person name="Lopez de Leon A."/>
            <person name="Xiang H."/>
            <person name="Gusti V."/>
            <person name="Clausen I.G."/>
            <person name="Olsen P.B."/>
            <person name="Rasmussen M.D."/>
            <person name="Andersen J.T."/>
            <person name="Joergensen P.L."/>
            <person name="Larsen T.S."/>
            <person name="Sorokin A."/>
            <person name="Bolotin A."/>
            <person name="Lapidus A."/>
            <person name="Galleron N."/>
            <person name="Ehrlich S.D."/>
            <person name="Berka R.M."/>
        </authorList>
    </citation>
    <scope>NUCLEOTIDE SEQUENCE [LARGE SCALE GENOMIC DNA]</scope>
    <source>
        <strain>ATCC 14580 / DSM 13 / JCM 2505 / CCUG 7422 / NBRC 12200 / NCIMB 9375 / NCTC 10341 / NRRL NRS-1264 / Gibson 46</strain>
    </source>
</reference>
<accession>Q65FU5</accession>
<accession>Q62RA3</accession>